<sequence length="77" mass="8139">MKLTCVLIIAVLFLTASQLITADYSRDKQEYGAERLRDAMGKFKGSRSCGHSGAGCYTRPCCPGLHCSGGHAGGLCV</sequence>
<keyword id="KW-1015">Disulfide bond</keyword>
<keyword id="KW-0960">Knottin</keyword>
<keyword id="KW-0528">Neurotoxin</keyword>
<keyword id="KW-0964">Secreted</keyword>
<keyword id="KW-0732">Signal</keyword>
<keyword id="KW-0800">Toxin</keyword>
<organism>
    <name type="scientific">Conus lividus</name>
    <name type="common">Livid cone</name>
    <dbReference type="NCBI Taxonomy" id="89426"/>
    <lineage>
        <taxon>Eukaryota</taxon>
        <taxon>Metazoa</taxon>
        <taxon>Spiralia</taxon>
        <taxon>Lophotrochozoa</taxon>
        <taxon>Mollusca</taxon>
        <taxon>Gastropoda</taxon>
        <taxon>Caenogastropoda</taxon>
        <taxon>Neogastropoda</taxon>
        <taxon>Conoidea</taxon>
        <taxon>Conidae</taxon>
        <taxon>Conus</taxon>
        <taxon>Lividoconus</taxon>
    </lineage>
</organism>
<name>O162_CONLI</name>
<feature type="signal peptide" evidence="2">
    <location>
        <begin position="1"/>
        <end position="22"/>
    </location>
</feature>
<feature type="propeptide" id="PRO_0000315488" evidence="3">
    <location>
        <begin position="23"/>
        <end position="47"/>
    </location>
</feature>
<feature type="peptide" id="PRO_0000315489" description="Conotoxin LiC42">
    <location>
        <begin position="48"/>
        <end position="77"/>
    </location>
</feature>
<feature type="disulfide bond" evidence="1">
    <location>
        <begin position="49"/>
        <end position="62"/>
    </location>
</feature>
<feature type="disulfide bond" evidence="1">
    <location>
        <begin position="56"/>
        <end position="67"/>
    </location>
</feature>
<feature type="disulfide bond" evidence="1">
    <location>
        <begin position="61"/>
        <end position="76"/>
    </location>
</feature>
<comment type="subcellular location">
    <subcellularLocation>
        <location evidence="1">Secreted</location>
    </subcellularLocation>
</comment>
<comment type="tissue specificity">
    <text>Expressed by the venom duct.</text>
</comment>
<comment type="domain">
    <text evidence="1">The presence of a 'disulfide through disulfide knot' structurally defines this protein as a knottin.</text>
</comment>
<comment type="domain">
    <text>The cysteine framework is VI/VII (C-C-CC-C-C).</text>
</comment>
<comment type="similarity">
    <text evidence="3">Belongs to the conotoxin O1 superfamily.</text>
</comment>
<evidence type="ECO:0000250" key="1"/>
<evidence type="ECO:0000255" key="2"/>
<evidence type="ECO:0000305" key="3"/>
<accession>Q3YEG6</accession>
<reference key="1">
    <citation type="journal article" date="2006" name="Chem. Biol. Drug Des.">
        <title>Novel O-superfamily conotoxins identified by cDNA cloning from three vermivorous Conus species.</title>
        <authorList>
            <person name="Zhangsun D."/>
            <person name="Luo S."/>
            <person name="Wu Y."/>
            <person name="Zhu X."/>
            <person name="Hu Y."/>
            <person name="Xie L."/>
        </authorList>
    </citation>
    <scope>NUCLEOTIDE SEQUENCE [MRNA]</scope>
    <source>
        <tissue>Venom duct</tissue>
    </source>
</reference>
<proteinExistence type="evidence at transcript level"/>
<dbReference type="EMBL" id="DQ141147">
    <property type="protein sequence ID" value="AAZ83783.1"/>
    <property type="molecule type" value="mRNA"/>
</dbReference>
<dbReference type="SMR" id="Q3YEG6"/>
<dbReference type="ConoServer" id="1135">
    <property type="toxin name" value="LiC42 precursor"/>
</dbReference>
<dbReference type="GO" id="GO:0005576">
    <property type="term" value="C:extracellular region"/>
    <property type="evidence" value="ECO:0007669"/>
    <property type="project" value="UniProtKB-SubCell"/>
</dbReference>
<dbReference type="GO" id="GO:0008200">
    <property type="term" value="F:ion channel inhibitor activity"/>
    <property type="evidence" value="ECO:0007669"/>
    <property type="project" value="InterPro"/>
</dbReference>
<dbReference type="GO" id="GO:0090729">
    <property type="term" value="F:toxin activity"/>
    <property type="evidence" value="ECO:0007669"/>
    <property type="project" value="UniProtKB-KW"/>
</dbReference>
<dbReference type="InterPro" id="IPR004214">
    <property type="entry name" value="Conotoxin"/>
</dbReference>
<dbReference type="Pfam" id="PF02950">
    <property type="entry name" value="Conotoxin"/>
    <property type="match status" value="1"/>
</dbReference>
<protein>
    <recommendedName>
        <fullName>Conotoxin LiC42</fullName>
    </recommendedName>
</protein>